<organism>
    <name type="scientific">Halorhodospira halophila (strain DSM 244 / SL1)</name>
    <name type="common">Ectothiorhodospira halophila (strain DSM 244 / SL1)</name>
    <dbReference type="NCBI Taxonomy" id="349124"/>
    <lineage>
        <taxon>Bacteria</taxon>
        <taxon>Pseudomonadati</taxon>
        <taxon>Pseudomonadota</taxon>
        <taxon>Gammaproteobacteria</taxon>
        <taxon>Chromatiales</taxon>
        <taxon>Ectothiorhodospiraceae</taxon>
        <taxon>Halorhodospira</taxon>
    </lineage>
</organism>
<feature type="chain" id="PRO_1000008430" description="Holo-[acyl-carrier-protein] synthase">
    <location>
        <begin position="1"/>
        <end position="126"/>
    </location>
</feature>
<feature type="binding site" evidence="1">
    <location>
        <position position="8"/>
    </location>
    <ligand>
        <name>Mg(2+)</name>
        <dbReference type="ChEBI" id="CHEBI:18420"/>
    </ligand>
</feature>
<feature type="binding site" evidence="1">
    <location>
        <position position="57"/>
    </location>
    <ligand>
        <name>Mg(2+)</name>
        <dbReference type="ChEBI" id="CHEBI:18420"/>
    </ligand>
</feature>
<accession>A1WT13</accession>
<proteinExistence type="inferred from homology"/>
<name>ACPS_HALHL</name>
<dbReference type="EC" id="2.7.8.7" evidence="1"/>
<dbReference type="EMBL" id="CP000544">
    <property type="protein sequence ID" value="ABM60825.1"/>
    <property type="molecule type" value="Genomic_DNA"/>
</dbReference>
<dbReference type="RefSeq" id="WP_011812848.1">
    <property type="nucleotide sequence ID" value="NC_008789.1"/>
</dbReference>
<dbReference type="SMR" id="A1WT13"/>
<dbReference type="STRING" id="349124.Hhal_0030"/>
<dbReference type="KEGG" id="hha:Hhal_0030"/>
<dbReference type="eggNOG" id="COG0736">
    <property type="taxonomic scope" value="Bacteria"/>
</dbReference>
<dbReference type="HOGENOM" id="CLU_089696_3_1_6"/>
<dbReference type="OrthoDB" id="517356at2"/>
<dbReference type="Proteomes" id="UP000000647">
    <property type="component" value="Chromosome"/>
</dbReference>
<dbReference type="GO" id="GO:0005737">
    <property type="term" value="C:cytoplasm"/>
    <property type="evidence" value="ECO:0007669"/>
    <property type="project" value="UniProtKB-SubCell"/>
</dbReference>
<dbReference type="GO" id="GO:0008897">
    <property type="term" value="F:holo-[acyl-carrier-protein] synthase activity"/>
    <property type="evidence" value="ECO:0007669"/>
    <property type="project" value="UniProtKB-UniRule"/>
</dbReference>
<dbReference type="GO" id="GO:0000287">
    <property type="term" value="F:magnesium ion binding"/>
    <property type="evidence" value="ECO:0007669"/>
    <property type="project" value="UniProtKB-UniRule"/>
</dbReference>
<dbReference type="GO" id="GO:0006633">
    <property type="term" value="P:fatty acid biosynthetic process"/>
    <property type="evidence" value="ECO:0007669"/>
    <property type="project" value="UniProtKB-UniRule"/>
</dbReference>
<dbReference type="FunFam" id="3.90.470.20:FF:000001">
    <property type="entry name" value="Holo-[acyl-carrier-protein] synthase"/>
    <property type="match status" value="1"/>
</dbReference>
<dbReference type="Gene3D" id="3.90.470.20">
    <property type="entry name" value="4'-phosphopantetheinyl transferase domain"/>
    <property type="match status" value="1"/>
</dbReference>
<dbReference type="HAMAP" id="MF_00101">
    <property type="entry name" value="AcpS"/>
    <property type="match status" value="1"/>
</dbReference>
<dbReference type="InterPro" id="IPR008278">
    <property type="entry name" value="4-PPantetheinyl_Trfase_dom"/>
</dbReference>
<dbReference type="InterPro" id="IPR037143">
    <property type="entry name" value="4-PPantetheinyl_Trfase_dom_sf"/>
</dbReference>
<dbReference type="InterPro" id="IPR002582">
    <property type="entry name" value="ACPS"/>
</dbReference>
<dbReference type="InterPro" id="IPR004568">
    <property type="entry name" value="Ppantetheine-prot_Trfase_dom"/>
</dbReference>
<dbReference type="NCBIfam" id="TIGR00516">
    <property type="entry name" value="acpS"/>
    <property type="match status" value="1"/>
</dbReference>
<dbReference type="NCBIfam" id="TIGR00556">
    <property type="entry name" value="pantethn_trn"/>
    <property type="match status" value="1"/>
</dbReference>
<dbReference type="Pfam" id="PF01648">
    <property type="entry name" value="ACPS"/>
    <property type="match status" value="1"/>
</dbReference>
<dbReference type="SUPFAM" id="SSF56214">
    <property type="entry name" value="4'-phosphopantetheinyl transferase"/>
    <property type="match status" value="1"/>
</dbReference>
<keyword id="KW-0963">Cytoplasm</keyword>
<keyword id="KW-0275">Fatty acid biosynthesis</keyword>
<keyword id="KW-0276">Fatty acid metabolism</keyword>
<keyword id="KW-0444">Lipid biosynthesis</keyword>
<keyword id="KW-0443">Lipid metabolism</keyword>
<keyword id="KW-0460">Magnesium</keyword>
<keyword id="KW-0479">Metal-binding</keyword>
<keyword id="KW-1185">Reference proteome</keyword>
<keyword id="KW-0808">Transferase</keyword>
<comment type="function">
    <text evidence="1">Transfers the 4'-phosphopantetheine moiety from coenzyme A to a Ser of acyl-carrier-protein.</text>
</comment>
<comment type="catalytic activity">
    <reaction evidence="1">
        <text>apo-[ACP] + CoA = holo-[ACP] + adenosine 3',5'-bisphosphate + H(+)</text>
        <dbReference type="Rhea" id="RHEA:12068"/>
        <dbReference type="Rhea" id="RHEA-COMP:9685"/>
        <dbReference type="Rhea" id="RHEA-COMP:9690"/>
        <dbReference type="ChEBI" id="CHEBI:15378"/>
        <dbReference type="ChEBI" id="CHEBI:29999"/>
        <dbReference type="ChEBI" id="CHEBI:57287"/>
        <dbReference type="ChEBI" id="CHEBI:58343"/>
        <dbReference type="ChEBI" id="CHEBI:64479"/>
        <dbReference type="EC" id="2.7.8.7"/>
    </reaction>
</comment>
<comment type="cofactor">
    <cofactor evidence="1">
        <name>Mg(2+)</name>
        <dbReference type="ChEBI" id="CHEBI:18420"/>
    </cofactor>
</comment>
<comment type="subcellular location">
    <subcellularLocation>
        <location evidence="1">Cytoplasm</location>
    </subcellularLocation>
</comment>
<comment type="similarity">
    <text evidence="1">Belongs to the P-Pant transferase superfamily. AcpS family.</text>
</comment>
<protein>
    <recommendedName>
        <fullName evidence="1">Holo-[acyl-carrier-protein] synthase</fullName>
        <shortName evidence="1">Holo-ACP synthase</shortName>
        <ecNumber evidence="1">2.7.8.7</ecNumber>
    </recommendedName>
    <alternativeName>
        <fullName evidence="1">4'-phosphopantetheinyl transferase AcpS</fullName>
    </alternativeName>
</protein>
<reference key="1">
    <citation type="submission" date="2006-12" db="EMBL/GenBank/DDBJ databases">
        <title>Complete sequence of Halorhodospira halophila SL1.</title>
        <authorList>
            <consortium name="US DOE Joint Genome Institute"/>
            <person name="Copeland A."/>
            <person name="Lucas S."/>
            <person name="Lapidus A."/>
            <person name="Barry K."/>
            <person name="Detter J.C."/>
            <person name="Glavina del Rio T."/>
            <person name="Hammon N."/>
            <person name="Israni S."/>
            <person name="Dalin E."/>
            <person name="Tice H."/>
            <person name="Pitluck S."/>
            <person name="Saunders E."/>
            <person name="Brettin T."/>
            <person name="Bruce D."/>
            <person name="Han C."/>
            <person name="Tapia R."/>
            <person name="Schmutz J."/>
            <person name="Larimer F."/>
            <person name="Land M."/>
            <person name="Hauser L."/>
            <person name="Kyrpides N."/>
            <person name="Mikhailova N."/>
            <person name="Hoff W."/>
            <person name="Richardson P."/>
        </authorList>
    </citation>
    <scope>NUCLEOTIDE SEQUENCE [LARGE SCALE GENOMIC DNA]</scope>
    <source>
        <strain>DSM 244 / SL1</strain>
    </source>
</reference>
<sequence length="126" mass="13389">MIAGIGTDIVAVVRLERALERHGERFAQRILAPTELLNFREGGATAAFLARRFAAKEAASKALGTGFSDGVTLRDLEVVHDVRGQPSLRFHGAAAERAVALGVSEAALSLSDEREYAVAFVILVTG</sequence>
<gene>
    <name evidence="1" type="primary">acpS</name>
    <name type="ordered locus">Hhal_0030</name>
</gene>
<evidence type="ECO:0000255" key="1">
    <source>
        <dbReference type="HAMAP-Rule" id="MF_00101"/>
    </source>
</evidence>